<sequence>MARVSGAAAAEAALMRALYDEHAAVLWRYALRLTGDAAQAEDVVQETLLRAWQHPEVIGDTARPARAWLFTVARNMIIDERRSARFRNVVGSTDQSGTPEQSTPDEVNAALDRLLIADALAQLSAEHRAVIQRSYYRGWSTAQIATDLGIAEGTVKSRLHYAVRALRLTLQELGVTR</sequence>
<reference key="1">
    <citation type="journal article" date="2012" name="J. Bacteriol.">
        <title>Complete annotated genome sequence of Mycobacterium tuberculosis Erdman.</title>
        <authorList>
            <person name="Miyoshi-Akiyama T."/>
            <person name="Matsumura K."/>
            <person name="Iwai H."/>
            <person name="Funatogawa K."/>
            <person name="Kirikae T."/>
        </authorList>
    </citation>
    <scope>NUCLEOTIDE SEQUENCE [LARGE SCALE GENOMIC DNA]</scope>
    <source>
        <strain>ATCC 35801 / TMC 107 / Erdman</strain>
    </source>
</reference>
<reference key="2">
    <citation type="journal article" date="2010" name="Mol. Microbiol.">
        <title>M. tuberculosis intramembrane protease Rip1 controls transcription through three anti-sigma factor substrates.</title>
        <authorList>
            <person name="Sklar J.G."/>
            <person name="Makinoshima H."/>
            <person name="Schneider J.S."/>
            <person name="Glickman M.S."/>
        </authorList>
    </citation>
    <scope>DISRUPTION PHENOTYPE</scope>
    <source>
        <strain>ATCC 35801 / TMC 107 / Erdman</strain>
    </source>
</reference>
<proteinExistence type="inferred from homology"/>
<organism>
    <name type="scientific">Mycobacterium tuberculosis (strain ATCC 35801 / TMC 107 / Erdman)</name>
    <dbReference type="NCBI Taxonomy" id="652616"/>
    <lineage>
        <taxon>Bacteria</taxon>
        <taxon>Bacillati</taxon>
        <taxon>Actinomycetota</taxon>
        <taxon>Actinomycetes</taxon>
        <taxon>Mycobacteriales</taxon>
        <taxon>Mycobacteriaceae</taxon>
        <taxon>Mycobacterium</taxon>
        <taxon>Mycobacterium tuberculosis complex</taxon>
    </lineage>
</organism>
<evidence type="ECO:0000250" key="1"/>
<evidence type="ECO:0000255" key="2"/>
<evidence type="ECO:0000269" key="3">
    <source>
    </source>
</evidence>
<evidence type="ECO:0000305" key="4"/>
<feature type="chain" id="PRO_0000422693" description="ECF RNA polymerase sigma factor SigL">
    <location>
        <begin position="1"/>
        <end position="177"/>
    </location>
</feature>
<feature type="DNA-binding region" description="H-T-H motif" evidence="2">
    <location>
        <begin position="141"/>
        <end position="160"/>
    </location>
</feature>
<feature type="region of interest" description="Sigma-70 factor domain-2">
    <location>
        <begin position="18"/>
        <end position="85"/>
    </location>
</feature>
<feature type="region of interest" description="Sigma-70 factor domain-4">
    <location>
        <begin position="119"/>
        <end position="167"/>
    </location>
</feature>
<feature type="short sequence motif" description="Interaction with polymerase core subunit RpoC">
    <location>
        <begin position="42"/>
        <end position="45"/>
    </location>
</feature>
<keyword id="KW-0238">DNA-binding</keyword>
<keyword id="KW-0731">Sigma factor</keyword>
<keyword id="KW-0804">Transcription</keyword>
<keyword id="KW-0805">Transcription regulation</keyword>
<protein>
    <recommendedName>
        <fullName>ECF RNA polymerase sigma factor SigL</fullName>
        <shortName>ECF sigma factor SigL</shortName>
    </recommendedName>
    <alternativeName>
        <fullName>Alternative RNA polymerase sigma factor SigL</fullName>
    </alternativeName>
    <alternativeName>
        <fullName>RNA polymerase sigma-L factor</fullName>
        <shortName>Sigma-L factor</shortName>
    </alternativeName>
</protein>
<dbReference type="EMBL" id="AP012340">
    <property type="protein sequence ID" value="BAL64620.1"/>
    <property type="molecule type" value="Genomic_DNA"/>
</dbReference>
<dbReference type="RefSeq" id="WP_003403731.1">
    <property type="nucleotide sequence ID" value="NZ_KK339487.1"/>
</dbReference>
<dbReference type="SMR" id="H8EXN1"/>
<dbReference type="GeneID" id="45424700"/>
<dbReference type="KEGG" id="mtn:ERDMAN_0808"/>
<dbReference type="PATRIC" id="fig|652616.3.peg.819"/>
<dbReference type="HOGENOM" id="CLU_047691_9_4_11"/>
<dbReference type="GO" id="GO:0003677">
    <property type="term" value="F:DNA binding"/>
    <property type="evidence" value="ECO:0007669"/>
    <property type="project" value="UniProtKB-KW"/>
</dbReference>
<dbReference type="GO" id="GO:0016987">
    <property type="term" value="F:sigma factor activity"/>
    <property type="evidence" value="ECO:0007669"/>
    <property type="project" value="UniProtKB-KW"/>
</dbReference>
<dbReference type="GO" id="GO:0006352">
    <property type="term" value="P:DNA-templated transcription initiation"/>
    <property type="evidence" value="ECO:0007669"/>
    <property type="project" value="InterPro"/>
</dbReference>
<dbReference type="CDD" id="cd06171">
    <property type="entry name" value="Sigma70_r4"/>
    <property type="match status" value="1"/>
</dbReference>
<dbReference type="FunFam" id="1.10.10.10:FF:000669">
    <property type="entry name" value="RNA polymerase sigma factor"/>
    <property type="match status" value="1"/>
</dbReference>
<dbReference type="Gene3D" id="1.10.1740.10">
    <property type="match status" value="1"/>
</dbReference>
<dbReference type="Gene3D" id="1.10.10.10">
    <property type="entry name" value="Winged helix-like DNA-binding domain superfamily/Winged helix DNA-binding domain"/>
    <property type="match status" value="1"/>
</dbReference>
<dbReference type="InterPro" id="IPR039425">
    <property type="entry name" value="RNA_pol_sigma-70-like"/>
</dbReference>
<dbReference type="InterPro" id="IPR014284">
    <property type="entry name" value="RNA_pol_sigma-70_dom"/>
</dbReference>
<dbReference type="InterPro" id="IPR000838">
    <property type="entry name" value="RNA_pol_sigma70_ECF_CS"/>
</dbReference>
<dbReference type="InterPro" id="IPR007627">
    <property type="entry name" value="RNA_pol_sigma70_r2"/>
</dbReference>
<dbReference type="InterPro" id="IPR007630">
    <property type="entry name" value="RNA_pol_sigma70_r4"/>
</dbReference>
<dbReference type="InterPro" id="IPR013325">
    <property type="entry name" value="RNA_pol_sigma_r2"/>
</dbReference>
<dbReference type="InterPro" id="IPR013324">
    <property type="entry name" value="RNA_pol_sigma_r3/r4-like"/>
</dbReference>
<dbReference type="InterPro" id="IPR036388">
    <property type="entry name" value="WH-like_DNA-bd_sf"/>
</dbReference>
<dbReference type="NCBIfam" id="NF007227">
    <property type="entry name" value="PRK09645.1"/>
    <property type="match status" value="1"/>
</dbReference>
<dbReference type="NCBIfam" id="TIGR02937">
    <property type="entry name" value="sigma70-ECF"/>
    <property type="match status" value="1"/>
</dbReference>
<dbReference type="PANTHER" id="PTHR43133:SF52">
    <property type="entry name" value="ECF RNA POLYMERASE SIGMA FACTOR SIGL"/>
    <property type="match status" value="1"/>
</dbReference>
<dbReference type="PANTHER" id="PTHR43133">
    <property type="entry name" value="RNA POLYMERASE ECF-TYPE SIGMA FACTO"/>
    <property type="match status" value="1"/>
</dbReference>
<dbReference type="Pfam" id="PF04542">
    <property type="entry name" value="Sigma70_r2"/>
    <property type="match status" value="1"/>
</dbReference>
<dbReference type="Pfam" id="PF04545">
    <property type="entry name" value="Sigma70_r4"/>
    <property type="match status" value="1"/>
</dbReference>
<dbReference type="SUPFAM" id="SSF88946">
    <property type="entry name" value="Sigma2 domain of RNA polymerase sigma factors"/>
    <property type="match status" value="1"/>
</dbReference>
<dbReference type="SUPFAM" id="SSF88659">
    <property type="entry name" value="Sigma3 and sigma4 domains of RNA polymerase sigma factors"/>
    <property type="match status" value="1"/>
</dbReference>
<dbReference type="PROSITE" id="PS01063">
    <property type="entry name" value="SIGMA70_ECF"/>
    <property type="match status" value="1"/>
</dbReference>
<accession>H8EXN1</accession>
<gene>
    <name type="primary">sigL</name>
    <name type="ordered locus">ERDMAN_0808</name>
</gene>
<comment type="function">
    <text evidence="1">Sigma factors are initiation factors that promote the attachment of RNA polymerase to specific initiation sites and are then released. Extracytoplasmic function (ECF) sigma factors are held in an inactive form by an anti-sigma factor until released by regulated intramembrane proteolysis (By similarity).</text>
</comment>
<comment type="subunit">
    <text evidence="1">Interacts transiently with the RNA polymerase catalytic core formed by RpoA, RpoB, RpoC and RpoZ (2 alpha, 1 beta, 1 beta' and 1 omega subunit) to form the RNA polymerase holoenzyme that can initiate transcription. Interacts (via sigma-70 factor domain 4) with anti-sigma-L factor RslA (By similarity).</text>
</comment>
<comment type="domain">
    <text evidence="1">The sigma-70 factor domain-2 mediates sequence-specific interaction with the -10 element in promoter DNA, and plays an important role in melting the double-stranded DNA and the formation of the transcription bubble. The sigma-70 factor domain-2 mediates interaction with the RNA polymerase subunits RpoB and RpoC (By similarity).</text>
</comment>
<comment type="domain">
    <text evidence="1">The sigma-70 factor domain-4 contains a helix-turn-helix (H-T-H) motif that mediates interaction with the -35 element in promoter DNA. The domain also mediates interaction with the RNA polymerase subunit RpoA. Interactions between sigma-70 factor domain-4 and anti-sigma factors prevents interaction of sigma factors with the RNA polymerase catalytic core (By similarity).</text>
</comment>
<comment type="disruption phenotype">
    <text evidence="3">Loss of phenanthroline induction of katG.</text>
</comment>
<comment type="miscellaneous">
    <text evidence="4">Extracytoplasmic function (ECF) sigma factors are held in an inactive form by an anti-sigma factor until released by regulated intramembrane proteolysis (RIP). RIP occurs when an extracytoplasmic signal triggers a concerted proteolytic cascade to transmit information and elicit cellular responses. The membrane-spanning anti-sigma factor then within the membrane itself (site-2 protease, S2P, Rip1), while cytoplasmic proteases finish degrading the regulatory protein, liberating SigL (Probable).</text>
</comment>
<comment type="similarity">
    <text evidence="4">Belongs to the sigma-70 factor family. ECF subfamily.</text>
</comment>
<name>SIGL_MYCTE</name>